<gene>
    <name type="primary">dbx1a</name>
    <name type="synonym">hlx1</name>
</gene>
<comment type="subcellular location">
    <subcellularLocation>
        <location evidence="1">Nucleus</location>
    </subcellularLocation>
</comment>
<comment type="developmental stage">
    <text evidence="3">Detected at 6-7 hours post-fertilization (hpf). Levels increase after 10 hpf and highest expression is seen at 24 hpf.</text>
</comment>
<comment type="similarity">
    <text evidence="4">Belongs to the H2.0 homeobox family.</text>
</comment>
<dbReference type="EMBL" id="AF030284">
    <property type="protein sequence ID" value="AAF18561.1"/>
    <property type="molecule type" value="mRNA"/>
</dbReference>
<dbReference type="EMBL" id="BC095020">
    <property type="protein sequence ID" value="AAH95020.1"/>
    <property type="molecule type" value="mRNA"/>
</dbReference>
<dbReference type="RefSeq" id="NP_571233.1">
    <property type="nucleotide sequence ID" value="NM_131158.1"/>
</dbReference>
<dbReference type="SMR" id="Q9PTU1"/>
<dbReference type="STRING" id="7955.ENSDARP00000023732"/>
<dbReference type="PaxDb" id="7955-ENSDARP00000023732"/>
<dbReference type="Ensembl" id="ENSDART00000022441">
    <property type="protein sequence ID" value="ENSDARP00000023732"/>
    <property type="gene ID" value="ENSDARG00000086393"/>
</dbReference>
<dbReference type="GeneID" id="30394"/>
<dbReference type="KEGG" id="dre:30394"/>
<dbReference type="AGR" id="ZFIN:ZDB-GENE-000128-8"/>
<dbReference type="CTD" id="30394"/>
<dbReference type="ZFIN" id="ZDB-GENE-000128-8">
    <property type="gene designation" value="dbx1a"/>
</dbReference>
<dbReference type="eggNOG" id="KOG0488">
    <property type="taxonomic scope" value="Eukaryota"/>
</dbReference>
<dbReference type="HOGENOM" id="CLU_053401_0_0_1"/>
<dbReference type="InParanoid" id="Q9PTU1"/>
<dbReference type="OMA" id="EYHFSRT"/>
<dbReference type="OrthoDB" id="10048112at2759"/>
<dbReference type="PhylomeDB" id="Q9PTU1"/>
<dbReference type="TreeFam" id="TF350735"/>
<dbReference type="PRO" id="PR:Q9PTU1"/>
<dbReference type="Proteomes" id="UP000000437">
    <property type="component" value="Chromosome 7"/>
</dbReference>
<dbReference type="Bgee" id="ENSDARG00000086393">
    <property type="expression patterns" value="Expressed in spinal cord neural tube and 68 other cell types or tissues"/>
</dbReference>
<dbReference type="ExpressionAtlas" id="Q9PTU1">
    <property type="expression patterns" value="baseline and differential"/>
</dbReference>
<dbReference type="GO" id="GO:0005634">
    <property type="term" value="C:nucleus"/>
    <property type="evidence" value="ECO:0007669"/>
    <property type="project" value="UniProtKB-SubCell"/>
</dbReference>
<dbReference type="GO" id="GO:0003677">
    <property type="term" value="F:DNA binding"/>
    <property type="evidence" value="ECO:0007669"/>
    <property type="project" value="UniProtKB-KW"/>
</dbReference>
<dbReference type="GO" id="GO:0000981">
    <property type="term" value="F:DNA-binding transcription factor activity, RNA polymerase II-specific"/>
    <property type="evidence" value="ECO:0007669"/>
    <property type="project" value="InterPro"/>
</dbReference>
<dbReference type="GO" id="GO:0021515">
    <property type="term" value="P:cell differentiation in spinal cord"/>
    <property type="evidence" value="ECO:0000316"/>
    <property type="project" value="ZFIN"/>
</dbReference>
<dbReference type="GO" id="GO:0006357">
    <property type="term" value="P:regulation of transcription by RNA polymerase II"/>
    <property type="evidence" value="ECO:0000318"/>
    <property type="project" value="GO_Central"/>
</dbReference>
<dbReference type="CDD" id="cd00086">
    <property type="entry name" value="homeodomain"/>
    <property type="match status" value="1"/>
</dbReference>
<dbReference type="FunFam" id="1.10.10.60:FF:000177">
    <property type="entry name" value="Homeobox protein DBX1"/>
    <property type="match status" value="1"/>
</dbReference>
<dbReference type="Gene3D" id="1.10.10.60">
    <property type="entry name" value="Homeodomain-like"/>
    <property type="match status" value="1"/>
</dbReference>
<dbReference type="InterPro" id="IPR051662">
    <property type="entry name" value="H2.0_Homeobox_NeuralPatt"/>
</dbReference>
<dbReference type="InterPro" id="IPR001356">
    <property type="entry name" value="HD"/>
</dbReference>
<dbReference type="InterPro" id="IPR020479">
    <property type="entry name" value="HD_metazoa"/>
</dbReference>
<dbReference type="InterPro" id="IPR017970">
    <property type="entry name" value="Homeobox_CS"/>
</dbReference>
<dbReference type="InterPro" id="IPR009057">
    <property type="entry name" value="Homeodomain-like_sf"/>
</dbReference>
<dbReference type="InterPro" id="IPR000047">
    <property type="entry name" value="HTH_motif"/>
</dbReference>
<dbReference type="PANTHER" id="PTHR24331">
    <property type="entry name" value="DBX"/>
    <property type="match status" value="1"/>
</dbReference>
<dbReference type="PANTHER" id="PTHR24331:SF6">
    <property type="entry name" value="HOMEOBOX PROTEIN DBX1"/>
    <property type="match status" value="1"/>
</dbReference>
<dbReference type="Pfam" id="PF00046">
    <property type="entry name" value="Homeodomain"/>
    <property type="match status" value="1"/>
</dbReference>
<dbReference type="PRINTS" id="PR00024">
    <property type="entry name" value="HOMEOBOX"/>
</dbReference>
<dbReference type="PRINTS" id="PR00031">
    <property type="entry name" value="HTHREPRESSR"/>
</dbReference>
<dbReference type="SMART" id="SM00389">
    <property type="entry name" value="HOX"/>
    <property type="match status" value="1"/>
</dbReference>
<dbReference type="SUPFAM" id="SSF46689">
    <property type="entry name" value="Homeodomain-like"/>
    <property type="match status" value="1"/>
</dbReference>
<dbReference type="PROSITE" id="PS00027">
    <property type="entry name" value="HOMEOBOX_1"/>
    <property type="match status" value="1"/>
</dbReference>
<dbReference type="PROSITE" id="PS50071">
    <property type="entry name" value="HOMEOBOX_2"/>
    <property type="match status" value="1"/>
</dbReference>
<protein>
    <recommendedName>
        <fullName>Homeobox protein DBX1-A</fullName>
    </recommendedName>
    <alternativeName>
        <fullName>Developing brain homeobox protein 1-A</fullName>
    </alternativeName>
    <alternativeName>
        <fullName>Homeobox protein hlx1</fullName>
    </alternativeName>
</protein>
<name>DBX1A_DANRE</name>
<reference key="1">
    <citation type="journal article" date="1999" name="Biochim. Biophys. Acta">
        <title>Three structurally and functionally conserved Hlx genes in zebrafish.</title>
        <authorList>
            <person name="Seo H.-C."/>
            <person name="Nilsen F."/>
            <person name="Fjose A."/>
        </authorList>
    </citation>
    <scope>NUCLEOTIDE SEQUENCE [MRNA]</scope>
    <scope>DEVELOPMENTAL STAGE</scope>
</reference>
<reference key="2">
    <citation type="submission" date="2005-05" db="EMBL/GenBank/DDBJ databases">
        <authorList>
            <consortium name="NIH - Zebrafish Gene Collection (ZGC) project"/>
        </authorList>
    </citation>
    <scope>NUCLEOTIDE SEQUENCE [LARGE SCALE MRNA]</scope>
    <source>
        <tissue>Larva</tissue>
    </source>
</reference>
<evidence type="ECO:0000255" key="1">
    <source>
        <dbReference type="PROSITE-ProRule" id="PRU00108"/>
    </source>
</evidence>
<evidence type="ECO:0000256" key="2">
    <source>
        <dbReference type="SAM" id="MobiDB-lite"/>
    </source>
</evidence>
<evidence type="ECO:0000269" key="3">
    <source>
    </source>
</evidence>
<evidence type="ECO:0000305" key="4"/>
<sequence>MMIPSVIAPPAIYSAFMRPAASLHSPFPAHPSFLVEDLLRINRPSGFLSQTAHSPCASPPNSTPLSIPDNCRILDRVSPGITEKHGPCSPKTPVSSKDPTYLKFGVSAILAPSPKKATSPPSVHSIHPKGFSVPYFDGSFCPFVRSSYFPAPSSVVPIPGTFSWPLAARGKPRRGMLRRAVFSDVQRKALEKMFQKQKYISKPDRKKLAAKLGLKDSQVKIWFQNRRMKWRNSKERELLSSGGCREQTLPTKTNPHPDLSDVGKKSSEDEDEDDACAPSHFCLSPRRVMSNSTDSSITFKHSDFSESEDEITVS</sequence>
<organism>
    <name type="scientific">Danio rerio</name>
    <name type="common">Zebrafish</name>
    <name type="synonym">Brachydanio rerio</name>
    <dbReference type="NCBI Taxonomy" id="7955"/>
    <lineage>
        <taxon>Eukaryota</taxon>
        <taxon>Metazoa</taxon>
        <taxon>Chordata</taxon>
        <taxon>Craniata</taxon>
        <taxon>Vertebrata</taxon>
        <taxon>Euteleostomi</taxon>
        <taxon>Actinopterygii</taxon>
        <taxon>Neopterygii</taxon>
        <taxon>Teleostei</taxon>
        <taxon>Ostariophysi</taxon>
        <taxon>Cypriniformes</taxon>
        <taxon>Danionidae</taxon>
        <taxon>Danioninae</taxon>
        <taxon>Danio</taxon>
    </lineage>
</organism>
<accession>Q9PTU1</accession>
<proteinExistence type="evidence at transcript level"/>
<feature type="chain" id="PRO_0000302845" description="Homeobox protein DBX1-A">
    <location>
        <begin position="1"/>
        <end position="314"/>
    </location>
</feature>
<feature type="DNA-binding region" description="Homeobox" evidence="1">
    <location>
        <begin position="175"/>
        <end position="234"/>
    </location>
</feature>
<feature type="region of interest" description="Disordered" evidence="2">
    <location>
        <begin position="234"/>
        <end position="279"/>
    </location>
</feature>
<feature type="region of interest" description="Disordered" evidence="2">
    <location>
        <begin position="292"/>
        <end position="314"/>
    </location>
</feature>
<feature type="compositionally biased region" description="Basic and acidic residues" evidence="2">
    <location>
        <begin position="258"/>
        <end position="267"/>
    </location>
</feature>
<feature type="compositionally biased region" description="Acidic residues" evidence="2">
    <location>
        <begin position="305"/>
        <end position="314"/>
    </location>
</feature>
<keyword id="KW-0217">Developmental protein</keyword>
<keyword id="KW-0238">DNA-binding</keyword>
<keyword id="KW-0371">Homeobox</keyword>
<keyword id="KW-0539">Nucleus</keyword>
<keyword id="KW-1185">Reference proteome</keyword>